<feature type="chain" id="PRO_1000023470" description="3-dehydroquinate dehydratase">
    <location>
        <begin position="1"/>
        <end position="149"/>
    </location>
</feature>
<feature type="active site" description="Proton acceptor" evidence="1">
    <location>
        <position position="26"/>
    </location>
</feature>
<feature type="active site" description="Proton donor" evidence="1">
    <location>
        <position position="103"/>
    </location>
</feature>
<feature type="binding site" evidence="1">
    <location>
        <position position="77"/>
    </location>
    <ligand>
        <name>substrate</name>
    </ligand>
</feature>
<feature type="binding site" evidence="1">
    <location>
        <position position="83"/>
    </location>
    <ligand>
        <name>substrate</name>
    </ligand>
</feature>
<feature type="binding site" evidence="1">
    <location>
        <position position="90"/>
    </location>
    <ligand>
        <name>substrate</name>
    </ligand>
</feature>
<feature type="binding site" evidence="1">
    <location>
        <begin position="104"/>
        <end position="105"/>
    </location>
    <ligand>
        <name>substrate</name>
    </ligand>
</feature>
<feature type="binding site" evidence="1">
    <location>
        <position position="114"/>
    </location>
    <ligand>
        <name>substrate</name>
    </ligand>
</feature>
<feature type="site" description="Transition state stabilizer" evidence="1">
    <location>
        <position position="21"/>
    </location>
</feature>
<reference key="1">
    <citation type="journal article" date="2007" name="Genome Biol.">
        <title>Characterization and modeling of the Haemophilus influenzae core and supragenomes based on the complete genomic sequences of Rd and 12 clinical nontypeable strains.</title>
        <authorList>
            <person name="Hogg J.S."/>
            <person name="Hu F.Z."/>
            <person name="Janto B."/>
            <person name="Boissy R."/>
            <person name="Hayes J."/>
            <person name="Keefe R."/>
            <person name="Post J.C."/>
            <person name="Ehrlich G.D."/>
        </authorList>
    </citation>
    <scope>NUCLEOTIDE SEQUENCE [LARGE SCALE GENOMIC DNA]</scope>
    <source>
        <strain>PittGG</strain>
    </source>
</reference>
<keyword id="KW-0028">Amino-acid biosynthesis</keyword>
<keyword id="KW-0057">Aromatic amino acid biosynthesis</keyword>
<keyword id="KW-0456">Lyase</keyword>
<comment type="function">
    <text evidence="1">Catalyzes a trans-dehydration via an enolate intermediate.</text>
</comment>
<comment type="catalytic activity">
    <reaction evidence="1">
        <text>3-dehydroquinate = 3-dehydroshikimate + H2O</text>
        <dbReference type="Rhea" id="RHEA:21096"/>
        <dbReference type="ChEBI" id="CHEBI:15377"/>
        <dbReference type="ChEBI" id="CHEBI:16630"/>
        <dbReference type="ChEBI" id="CHEBI:32364"/>
        <dbReference type="EC" id="4.2.1.10"/>
    </reaction>
</comment>
<comment type="pathway">
    <text evidence="1">Metabolic intermediate biosynthesis; chorismate biosynthesis; chorismate from D-erythrose 4-phosphate and phosphoenolpyruvate: step 3/7.</text>
</comment>
<comment type="subunit">
    <text evidence="1">Homododecamer.</text>
</comment>
<comment type="similarity">
    <text evidence="1">Belongs to the type-II 3-dehydroquinase family.</text>
</comment>
<evidence type="ECO:0000255" key="1">
    <source>
        <dbReference type="HAMAP-Rule" id="MF_00169"/>
    </source>
</evidence>
<name>AROQ_HAEIG</name>
<sequence length="149" mass="16838">MSQTHRILLLNGPNLNMLGAREPKHYGSISLESIEEKIQTLATQHNVKVECFQANSEEKLINKIHESFQQVDFILINPAAYTHTSVALRDALLAVSIPFVEIHLSNVHKREPFRHHSYFSDVAEGVICGLGAKGYEFAFLFAMDYLAKK</sequence>
<organism>
    <name type="scientific">Haemophilus influenzae (strain PittGG)</name>
    <dbReference type="NCBI Taxonomy" id="374931"/>
    <lineage>
        <taxon>Bacteria</taxon>
        <taxon>Pseudomonadati</taxon>
        <taxon>Pseudomonadota</taxon>
        <taxon>Gammaproteobacteria</taxon>
        <taxon>Pasteurellales</taxon>
        <taxon>Pasteurellaceae</taxon>
        <taxon>Haemophilus</taxon>
    </lineage>
</organism>
<protein>
    <recommendedName>
        <fullName evidence="1">3-dehydroquinate dehydratase</fullName>
        <shortName evidence="1">3-dehydroquinase</shortName>
        <ecNumber evidence="1">4.2.1.10</ecNumber>
    </recommendedName>
    <alternativeName>
        <fullName evidence="1">Type II DHQase</fullName>
    </alternativeName>
</protein>
<accession>A5UIB2</accession>
<proteinExistence type="inferred from homology"/>
<gene>
    <name evidence="1" type="primary">aroQ</name>
    <name type="ordered locus">CGSHiGG_08430</name>
</gene>
<dbReference type="EC" id="4.2.1.10" evidence="1"/>
<dbReference type="EMBL" id="CP000672">
    <property type="protein sequence ID" value="ABR00518.1"/>
    <property type="molecule type" value="Genomic_DNA"/>
</dbReference>
<dbReference type="SMR" id="A5UIB2"/>
<dbReference type="KEGG" id="hiq:CGSHiGG_08430"/>
<dbReference type="HOGENOM" id="CLU_090968_1_0_6"/>
<dbReference type="UniPathway" id="UPA00053">
    <property type="reaction ID" value="UER00086"/>
</dbReference>
<dbReference type="Proteomes" id="UP000001990">
    <property type="component" value="Chromosome"/>
</dbReference>
<dbReference type="GO" id="GO:0003855">
    <property type="term" value="F:3-dehydroquinate dehydratase activity"/>
    <property type="evidence" value="ECO:0007669"/>
    <property type="project" value="UniProtKB-UniRule"/>
</dbReference>
<dbReference type="GO" id="GO:0008652">
    <property type="term" value="P:amino acid biosynthetic process"/>
    <property type="evidence" value="ECO:0007669"/>
    <property type="project" value="UniProtKB-KW"/>
</dbReference>
<dbReference type="GO" id="GO:0009073">
    <property type="term" value="P:aromatic amino acid family biosynthetic process"/>
    <property type="evidence" value="ECO:0007669"/>
    <property type="project" value="UniProtKB-KW"/>
</dbReference>
<dbReference type="GO" id="GO:0009423">
    <property type="term" value="P:chorismate biosynthetic process"/>
    <property type="evidence" value="ECO:0007669"/>
    <property type="project" value="UniProtKB-UniRule"/>
</dbReference>
<dbReference type="GO" id="GO:0019631">
    <property type="term" value="P:quinate catabolic process"/>
    <property type="evidence" value="ECO:0007669"/>
    <property type="project" value="TreeGrafter"/>
</dbReference>
<dbReference type="CDD" id="cd00466">
    <property type="entry name" value="DHQase_II"/>
    <property type="match status" value="1"/>
</dbReference>
<dbReference type="Gene3D" id="3.40.50.9100">
    <property type="entry name" value="Dehydroquinase, class II"/>
    <property type="match status" value="1"/>
</dbReference>
<dbReference type="HAMAP" id="MF_00169">
    <property type="entry name" value="AroQ"/>
    <property type="match status" value="1"/>
</dbReference>
<dbReference type="InterPro" id="IPR001874">
    <property type="entry name" value="DHquinase_II"/>
</dbReference>
<dbReference type="InterPro" id="IPR018509">
    <property type="entry name" value="DHquinase_II_CS"/>
</dbReference>
<dbReference type="InterPro" id="IPR036441">
    <property type="entry name" value="DHquinase_II_sf"/>
</dbReference>
<dbReference type="NCBIfam" id="TIGR01088">
    <property type="entry name" value="aroQ"/>
    <property type="match status" value="1"/>
</dbReference>
<dbReference type="NCBIfam" id="NF003804">
    <property type="entry name" value="PRK05395.1-1"/>
    <property type="match status" value="1"/>
</dbReference>
<dbReference type="NCBIfam" id="NF003805">
    <property type="entry name" value="PRK05395.1-2"/>
    <property type="match status" value="1"/>
</dbReference>
<dbReference type="NCBIfam" id="NF003806">
    <property type="entry name" value="PRK05395.1-3"/>
    <property type="match status" value="1"/>
</dbReference>
<dbReference type="NCBIfam" id="NF003807">
    <property type="entry name" value="PRK05395.1-4"/>
    <property type="match status" value="1"/>
</dbReference>
<dbReference type="PANTHER" id="PTHR21272">
    <property type="entry name" value="CATABOLIC 3-DEHYDROQUINASE"/>
    <property type="match status" value="1"/>
</dbReference>
<dbReference type="PANTHER" id="PTHR21272:SF3">
    <property type="entry name" value="CATABOLIC 3-DEHYDROQUINASE"/>
    <property type="match status" value="1"/>
</dbReference>
<dbReference type="Pfam" id="PF01220">
    <property type="entry name" value="DHquinase_II"/>
    <property type="match status" value="1"/>
</dbReference>
<dbReference type="PIRSF" id="PIRSF001399">
    <property type="entry name" value="DHquinase_II"/>
    <property type="match status" value="1"/>
</dbReference>
<dbReference type="SUPFAM" id="SSF52304">
    <property type="entry name" value="Type II 3-dehydroquinate dehydratase"/>
    <property type="match status" value="1"/>
</dbReference>
<dbReference type="PROSITE" id="PS01029">
    <property type="entry name" value="DEHYDROQUINASE_II"/>
    <property type="match status" value="1"/>
</dbReference>